<proteinExistence type="inferred from homology"/>
<comment type="function">
    <text evidence="1">DNA-dependent RNA polymerase catalyzes the transcription of DNA into RNA using the four ribonucleoside triphosphates as substrates. Specific core component of RNA polymerase III which synthesizes small RNAs, such as 5S rRNA and tRNAs (By similarity).</text>
</comment>
<comment type="subunit">
    <text evidence="1">Component of the RNA polymerase III (Pol III) complex consisting of 17 subunits.</text>
</comment>
<comment type="subcellular location">
    <subcellularLocation>
        <location evidence="1">Nucleus</location>
    </subcellularLocation>
</comment>
<comment type="similarity">
    <text evidence="3">Belongs to the RNA polymerase beta chain family.</text>
</comment>
<evidence type="ECO:0000250" key="1"/>
<evidence type="ECO:0000256" key="2">
    <source>
        <dbReference type="SAM" id="MobiDB-lite"/>
    </source>
</evidence>
<evidence type="ECO:0000305" key="3"/>
<keyword id="KW-0240">DNA-directed RNA polymerase</keyword>
<keyword id="KW-0539">Nucleus</keyword>
<keyword id="KW-1185">Reference proteome</keyword>
<keyword id="KW-0804">Transcription</keyword>
<keyword id="KW-0862">Zinc</keyword>
<feature type="chain" id="PRO_0000351023" description="DNA-directed RNA polymerase III subunit rpc3">
    <location>
        <begin position="1"/>
        <end position="635"/>
    </location>
</feature>
<feature type="region of interest" description="Disordered" evidence="2">
    <location>
        <begin position="131"/>
        <end position="164"/>
    </location>
</feature>
<feature type="region of interest" description="Disordered" evidence="2">
    <location>
        <begin position="246"/>
        <end position="295"/>
    </location>
</feature>
<feature type="region of interest" description="Disordered" evidence="2">
    <location>
        <begin position="386"/>
        <end position="424"/>
    </location>
</feature>
<feature type="region of interest" description="Leucine-zipper">
    <location>
        <begin position="562"/>
        <end position="583"/>
    </location>
</feature>
<feature type="compositionally biased region" description="Acidic residues" evidence="2">
    <location>
        <begin position="272"/>
        <end position="292"/>
    </location>
</feature>
<feature type="compositionally biased region" description="Basic and acidic residues" evidence="2">
    <location>
        <begin position="398"/>
        <end position="407"/>
    </location>
</feature>
<feature type="compositionally biased region" description="Polar residues" evidence="2">
    <location>
        <begin position="411"/>
        <end position="424"/>
    </location>
</feature>
<name>RPC3_ASPCL</name>
<dbReference type="EMBL" id="DS027004">
    <property type="protein sequence ID" value="EAW14685.1"/>
    <property type="molecule type" value="Genomic_DNA"/>
</dbReference>
<dbReference type="RefSeq" id="XP_001276111.1">
    <property type="nucleotide sequence ID" value="XM_001276110.1"/>
</dbReference>
<dbReference type="SMR" id="A1C4R7"/>
<dbReference type="STRING" id="344612.A1C4R7"/>
<dbReference type="EnsemblFungi" id="EAW14685">
    <property type="protein sequence ID" value="EAW14685"/>
    <property type="gene ID" value="ACLA_000960"/>
</dbReference>
<dbReference type="GeneID" id="4708581"/>
<dbReference type="KEGG" id="act:ACLA_000960"/>
<dbReference type="VEuPathDB" id="FungiDB:ACLA_000960"/>
<dbReference type="eggNOG" id="KOG2587">
    <property type="taxonomic scope" value="Eukaryota"/>
</dbReference>
<dbReference type="HOGENOM" id="CLU_023294_0_0_1"/>
<dbReference type="OMA" id="KHRFVRH"/>
<dbReference type="OrthoDB" id="272392at2759"/>
<dbReference type="Proteomes" id="UP000006701">
    <property type="component" value="Unassembled WGS sequence"/>
</dbReference>
<dbReference type="GO" id="GO:0005666">
    <property type="term" value="C:RNA polymerase III complex"/>
    <property type="evidence" value="ECO:0007669"/>
    <property type="project" value="InterPro"/>
</dbReference>
<dbReference type="GO" id="GO:0003697">
    <property type="term" value="F:single-stranded DNA binding"/>
    <property type="evidence" value="ECO:0007669"/>
    <property type="project" value="InterPro"/>
</dbReference>
<dbReference type="GO" id="GO:0006351">
    <property type="term" value="P:DNA-templated transcription"/>
    <property type="evidence" value="ECO:0007669"/>
    <property type="project" value="InterPro"/>
</dbReference>
<dbReference type="FunFam" id="1.10.10.10:FF:000362">
    <property type="entry name" value="DNA-directed RNA polymerase III subunit rpc3"/>
    <property type="match status" value="1"/>
</dbReference>
<dbReference type="FunFam" id="1.10.10.10:FF:000696">
    <property type="entry name" value="DNA-directed RNA polymerase III subunit rpc3"/>
    <property type="match status" value="1"/>
</dbReference>
<dbReference type="Gene3D" id="1.10.10.10">
    <property type="entry name" value="Winged helix-like DNA-binding domain superfamily/Winged helix DNA-binding domain"/>
    <property type="match status" value="2"/>
</dbReference>
<dbReference type="InterPro" id="IPR055207">
    <property type="entry name" value="POLR3C_WHD"/>
</dbReference>
<dbReference type="InterPro" id="IPR013197">
    <property type="entry name" value="RNA_pol_III_RPC82-rel_HTH"/>
</dbReference>
<dbReference type="InterPro" id="IPR008806">
    <property type="entry name" value="RNA_pol_III_Rpc82_C"/>
</dbReference>
<dbReference type="InterPro" id="IPR039748">
    <property type="entry name" value="RPC3"/>
</dbReference>
<dbReference type="InterPro" id="IPR036388">
    <property type="entry name" value="WH-like_DNA-bd_sf"/>
</dbReference>
<dbReference type="InterPro" id="IPR036390">
    <property type="entry name" value="WH_DNA-bd_sf"/>
</dbReference>
<dbReference type="PANTHER" id="PTHR12949:SF0">
    <property type="entry name" value="DNA-DIRECTED RNA POLYMERASE III SUBUNIT RPC3"/>
    <property type="match status" value="1"/>
</dbReference>
<dbReference type="PANTHER" id="PTHR12949">
    <property type="entry name" value="RNA POLYMERASE III DNA DIRECTED -RELATED"/>
    <property type="match status" value="1"/>
</dbReference>
<dbReference type="Pfam" id="PF08221">
    <property type="entry name" value="HTH_9"/>
    <property type="match status" value="1"/>
</dbReference>
<dbReference type="Pfam" id="PF22536">
    <property type="entry name" value="POLR3C_WHD"/>
    <property type="match status" value="1"/>
</dbReference>
<dbReference type="Pfam" id="PF05645">
    <property type="entry name" value="RNA_pol_Rpc82"/>
    <property type="match status" value="1"/>
</dbReference>
<dbReference type="SUPFAM" id="SSF46785">
    <property type="entry name" value="Winged helix' DNA-binding domain"/>
    <property type="match status" value="1"/>
</dbReference>
<protein>
    <recommendedName>
        <fullName>DNA-directed RNA polymerase III subunit rpc3</fullName>
        <shortName>RNA polymerase III subunit C3</shortName>
    </recommendedName>
</protein>
<accession>A1C4R7</accession>
<organism>
    <name type="scientific">Aspergillus clavatus (strain ATCC 1007 / CBS 513.65 / DSM 816 / NCTC 3887 / NRRL 1 / QM 1276 / 107)</name>
    <dbReference type="NCBI Taxonomy" id="344612"/>
    <lineage>
        <taxon>Eukaryota</taxon>
        <taxon>Fungi</taxon>
        <taxon>Dikarya</taxon>
        <taxon>Ascomycota</taxon>
        <taxon>Pezizomycotina</taxon>
        <taxon>Eurotiomycetes</taxon>
        <taxon>Eurotiomycetidae</taxon>
        <taxon>Eurotiales</taxon>
        <taxon>Aspergillaceae</taxon>
        <taxon>Aspergillus</taxon>
        <taxon>Aspergillus subgen. Fumigati</taxon>
    </lineage>
</organism>
<gene>
    <name type="primary">rpc82</name>
    <name type="synonym">rpc3</name>
    <name type="ORF">ACLA_000960</name>
</gene>
<reference key="1">
    <citation type="journal article" date="2008" name="PLoS Genet.">
        <title>Genomic islands in the pathogenic filamentous fungus Aspergillus fumigatus.</title>
        <authorList>
            <person name="Fedorova N.D."/>
            <person name="Khaldi N."/>
            <person name="Joardar V.S."/>
            <person name="Maiti R."/>
            <person name="Amedeo P."/>
            <person name="Anderson M.J."/>
            <person name="Crabtree J."/>
            <person name="Silva J.C."/>
            <person name="Badger J.H."/>
            <person name="Albarraq A."/>
            <person name="Angiuoli S."/>
            <person name="Bussey H."/>
            <person name="Bowyer P."/>
            <person name="Cotty P.J."/>
            <person name="Dyer P.S."/>
            <person name="Egan A."/>
            <person name="Galens K."/>
            <person name="Fraser-Liggett C.M."/>
            <person name="Haas B.J."/>
            <person name="Inman J.M."/>
            <person name="Kent R."/>
            <person name="Lemieux S."/>
            <person name="Malavazi I."/>
            <person name="Orvis J."/>
            <person name="Roemer T."/>
            <person name="Ronning C.M."/>
            <person name="Sundaram J.P."/>
            <person name="Sutton G."/>
            <person name="Turner G."/>
            <person name="Venter J.C."/>
            <person name="White O.R."/>
            <person name="Whitty B.R."/>
            <person name="Youngman P."/>
            <person name="Wolfe K.H."/>
            <person name="Goldman G.H."/>
            <person name="Wortman J.R."/>
            <person name="Jiang B."/>
            <person name="Denning D.W."/>
            <person name="Nierman W.C."/>
        </authorList>
    </citation>
    <scope>NUCLEOTIDE SEQUENCE [LARGE SCALE GENOMIC DNA]</scope>
    <source>
        <strain>ATCC 1007 / CBS 513.65 / DSM 816 / NCTC 3887 / NRRL 1 / QM 1276 / 107</strain>
    </source>
</reference>
<sequence>MASQYAAELCALLVEDNFGELFARIFSTLTRYDRLNLPRLKFHSGLSNRQLLPALAAMIQQHLVYHYTSYDDGVTYYEANLQSAYYLVRAGKILEFVEERLGKYAATVMSSIMYLGHAQVSHLENLPELQPEQSHTNGVDKEHDEVDGDEEQPNGLSGDHSDQQPALLHPTLKVLAAHGYIIRVREAQFQSHADNILDAERVLKSRPEIKAMKGKRMEEAVIEGTLELLKERTDGDLTRGLMVQGVPRGAKRKHGSKSADAPNKKARVDFASVDEDDEQDEEENEWSDDEMGYDTTPMESGLVVRVNYNKLDVALRNCRFIQIAEQDASPATAEVYECLLRRIEYQTHQCRDTVEIPREGEEGEQYSVPIALSAVAEDVDPRLDLSGSIGPMEISQPDNRRGKRPLEDDVNGTNHEGANGLSSGGNRTFEVDQHLCLLAQPPHNLTSKRIVSGLITWTVEFRHLARKLRHLELERMIEARYGDVALRVVRVLHAKGKLDEKRLQEISLLPFKDLRQVLASMQAGGFVDLQEVPRDAQRQPSRTIYLWYYDPDRICNSVLQDTYKAMSRCFQRLRFERNRLKEFLEKTERSDVKGNEERYLSEGELALLQQWKAKEALLIGEVARLDEMVAVMRDY</sequence>